<accession>P68475</accession>
<accession>P20544</accession>
<reference key="1">
    <citation type="journal article" date="1990" name="Virology">
        <title>The complete DNA sequence of vaccinia virus.</title>
        <authorList>
            <person name="Goebel S.J."/>
            <person name="Johnson G.P."/>
            <person name="Perkus M.E."/>
            <person name="Davis S.W."/>
            <person name="Winslow J.P."/>
            <person name="Paoletti E."/>
        </authorList>
    </citation>
    <scope>NUCLEOTIDE SEQUENCE [LARGE SCALE GENOMIC DNA]</scope>
</reference>
<reference key="2">
    <citation type="journal article" date="1990" name="Virology">
        <title>Appendix to 'The complete DNA sequence of vaccinia virus'.</title>
        <authorList>
            <person name="Goebel S.J."/>
            <person name="Johnson G.P."/>
            <person name="Perkus M.E."/>
            <person name="Davis S.W."/>
            <person name="Winslow J.P."/>
            <person name="Paoletti E."/>
        </authorList>
    </citation>
    <scope>COMPLETE GENOME</scope>
</reference>
<feature type="chain" id="PRO_0000099671" description="Uncharacterized 7.8 kDa protein">
    <location>
        <begin position="1"/>
        <end position="71"/>
    </location>
</feature>
<organismHost>
    <name type="scientific">Homo sapiens</name>
    <name type="common">Human</name>
    <dbReference type="NCBI Taxonomy" id="9606"/>
</organismHost>
<protein>
    <recommendedName>
        <fullName>Uncharacterized 7.8 kDa protein</fullName>
    </recommendedName>
</protein>
<name>YVBD_VACCC</name>
<keyword id="KW-1185">Reference proteome</keyword>
<sequence>MNSIPVPTLTETSRSFIIIPLSVSITHCLTRDSFGIVRTISSNGITAHLVNSLYILCNMALLLPYTINLLL</sequence>
<organism>
    <name type="scientific">Vaccinia virus (strain Copenhagen)</name>
    <name type="common">VACV</name>
    <dbReference type="NCBI Taxonomy" id="10249"/>
    <lineage>
        <taxon>Viruses</taxon>
        <taxon>Varidnaviria</taxon>
        <taxon>Bamfordvirae</taxon>
        <taxon>Nucleocytoviricota</taxon>
        <taxon>Pokkesviricetes</taxon>
        <taxon>Chitovirales</taxon>
        <taxon>Poxviridae</taxon>
        <taxon>Chordopoxvirinae</taxon>
        <taxon>Orthopoxvirus</taxon>
        <taxon>Vaccinia virus</taxon>
    </lineage>
</organism>
<dbReference type="EMBL" id="M35027">
    <property type="protein sequence ID" value="AAA48203.1"/>
    <property type="molecule type" value="Genomic_DNA"/>
</dbReference>
<dbReference type="PIR" id="E42529">
    <property type="entry name" value="E42529"/>
</dbReference>
<dbReference type="Proteomes" id="UP000008269">
    <property type="component" value="Segment"/>
</dbReference>
<gene>
    <name type="ORF">B ORF D</name>
</gene>
<proteinExistence type="predicted"/>